<organism>
    <name type="scientific">Pyrococcus horikoshii (strain ATCC 700860 / DSM 12428 / JCM 9974 / NBRC 100139 / OT-3)</name>
    <dbReference type="NCBI Taxonomy" id="70601"/>
    <lineage>
        <taxon>Archaea</taxon>
        <taxon>Methanobacteriati</taxon>
        <taxon>Methanobacteriota</taxon>
        <taxon>Thermococci</taxon>
        <taxon>Thermococcales</taxon>
        <taxon>Thermococcaceae</taxon>
        <taxon>Pyrococcus</taxon>
    </lineage>
</organism>
<comment type="function">
    <text evidence="1">Catalyzes the reductive methylation of 2'-deoxyuridine-5'-monophosphate (dUMP) to 2'-deoxythymidine-5'-monophosphate (dTMP) while utilizing 5,10-methylenetetrahydrofolate (mTHF) as the methyl donor, and NADPH and FADH(2) as the reductant.</text>
</comment>
<comment type="catalytic activity">
    <reaction evidence="1">
        <text>dUMP + (6R)-5,10-methylene-5,6,7,8-tetrahydrofolate + NADPH + H(+) = dTMP + (6S)-5,6,7,8-tetrahydrofolate + NADP(+)</text>
        <dbReference type="Rhea" id="RHEA:29043"/>
        <dbReference type="ChEBI" id="CHEBI:15378"/>
        <dbReference type="ChEBI" id="CHEBI:15636"/>
        <dbReference type="ChEBI" id="CHEBI:57453"/>
        <dbReference type="ChEBI" id="CHEBI:57783"/>
        <dbReference type="ChEBI" id="CHEBI:58349"/>
        <dbReference type="ChEBI" id="CHEBI:63528"/>
        <dbReference type="ChEBI" id="CHEBI:246422"/>
        <dbReference type="EC" id="2.1.1.148"/>
    </reaction>
</comment>
<comment type="cofactor">
    <cofactor evidence="1">
        <name>FAD</name>
        <dbReference type="ChEBI" id="CHEBI:57692"/>
    </cofactor>
    <text evidence="1">Binds 4 FAD per tetramer. Each FAD binding site is formed by three monomers.</text>
</comment>
<comment type="pathway">
    <text evidence="1">Pyrimidine metabolism; dTTP biosynthesis.</text>
</comment>
<comment type="subunit">
    <text evidence="1">Homotetramer.</text>
</comment>
<comment type="similarity">
    <text evidence="1">Belongs to the thymidylate synthase ThyX family.</text>
</comment>
<protein>
    <recommendedName>
        <fullName evidence="1">Flavin-dependent thymidylate synthase</fullName>
        <shortName evidence="1">FDTS</shortName>
        <ecNumber evidence="1">2.1.1.148</ecNumber>
    </recommendedName>
    <alternativeName>
        <fullName evidence="1">FAD-dependent thymidylate synthase</fullName>
    </alternativeName>
    <alternativeName>
        <fullName evidence="1">Thymidylate synthase ThyX</fullName>
        <shortName evidence="1">TS</shortName>
        <shortName evidence="1">TSase</shortName>
    </alternativeName>
</protein>
<feature type="chain" id="PRO_0000175594" description="Flavin-dependent thymidylate synthase">
    <location>
        <begin position="1"/>
        <end position="243"/>
    </location>
</feature>
<feature type="domain" description="ThyX" evidence="2">
    <location>
        <begin position="2"/>
        <end position="207"/>
    </location>
</feature>
<feature type="short sequence motif" description="ThyX motif" evidence="1">
    <location>
        <begin position="80"/>
        <end position="90"/>
    </location>
</feature>
<feature type="active site" description="Involved in ionization of N3 of dUMP, leading to its activation" evidence="1">
    <location>
        <position position="173"/>
    </location>
</feature>
<feature type="binding site" evidence="1">
    <location>
        <position position="56"/>
    </location>
    <ligand>
        <name>FAD</name>
        <dbReference type="ChEBI" id="CHEBI:57692"/>
        <note>ligand shared between neighboring subunits</note>
    </ligand>
</feature>
<feature type="binding site" evidence="1">
    <location>
        <begin position="77"/>
        <end position="80"/>
    </location>
    <ligand>
        <name>dUMP</name>
        <dbReference type="ChEBI" id="CHEBI:246422"/>
        <note>ligand shared between dimeric partners</note>
    </ligand>
</feature>
<feature type="binding site" evidence="1">
    <location>
        <begin position="80"/>
        <end position="82"/>
    </location>
    <ligand>
        <name>FAD</name>
        <dbReference type="ChEBI" id="CHEBI:57692"/>
        <note>ligand shared between neighboring subunits</note>
    </ligand>
</feature>
<feature type="binding site" description="in other chain" evidence="1">
    <location>
        <begin position="88"/>
        <end position="92"/>
    </location>
    <ligand>
        <name>dUMP</name>
        <dbReference type="ChEBI" id="CHEBI:246422"/>
        <note>ligand shared between dimeric partners</note>
    </ligand>
</feature>
<feature type="binding site" evidence="1">
    <location>
        <position position="88"/>
    </location>
    <ligand>
        <name>FAD</name>
        <dbReference type="ChEBI" id="CHEBI:57692"/>
        <note>ligand shared between neighboring subunits</note>
    </ligand>
</feature>
<feature type="binding site" description="in other chain" evidence="1">
    <location>
        <position position="146"/>
    </location>
    <ligand>
        <name>dUMP</name>
        <dbReference type="ChEBI" id="CHEBI:246422"/>
        <note>ligand shared between dimeric partners</note>
    </ligand>
</feature>
<feature type="binding site" evidence="1">
    <location>
        <begin position="162"/>
        <end position="164"/>
    </location>
    <ligand>
        <name>FAD</name>
        <dbReference type="ChEBI" id="CHEBI:57692"/>
        <note>ligand shared between neighboring subunits</note>
    </ligand>
</feature>
<feature type="binding site" evidence="1">
    <location>
        <position position="168"/>
    </location>
    <ligand>
        <name>FAD</name>
        <dbReference type="ChEBI" id="CHEBI:57692"/>
        <note>ligand shared between neighboring subunits</note>
    </ligand>
</feature>
<feature type="binding site" evidence="1">
    <location>
        <position position="173"/>
    </location>
    <ligand>
        <name>dUMP</name>
        <dbReference type="ChEBI" id="CHEBI:246422"/>
        <note>ligand shared between dimeric partners</note>
    </ligand>
</feature>
<proteinExistence type="inferred from homology"/>
<keyword id="KW-0274">FAD</keyword>
<keyword id="KW-0285">Flavoprotein</keyword>
<keyword id="KW-0489">Methyltransferase</keyword>
<keyword id="KW-0521">NADP</keyword>
<keyword id="KW-0545">Nucleotide biosynthesis</keyword>
<keyword id="KW-0808">Transferase</keyword>
<dbReference type="EC" id="2.1.1.148" evidence="1"/>
<dbReference type="EMBL" id="BA000001">
    <property type="protein sequence ID" value="BAA29853.1"/>
    <property type="molecule type" value="Genomic_DNA"/>
</dbReference>
<dbReference type="PIR" id="C71124">
    <property type="entry name" value="C71124"/>
</dbReference>
<dbReference type="RefSeq" id="WP_010884853.1">
    <property type="nucleotide sequence ID" value="NC_000961.1"/>
</dbReference>
<dbReference type="SMR" id="O58498"/>
<dbReference type="MINT" id="O58498"/>
<dbReference type="STRING" id="70601.gene:9377709"/>
<dbReference type="EnsemblBacteria" id="BAA29853">
    <property type="protein sequence ID" value="BAA29853"/>
    <property type="gene ID" value="BAA29853"/>
</dbReference>
<dbReference type="GeneID" id="1443088"/>
<dbReference type="KEGG" id="pho:PH0762"/>
<dbReference type="eggNOG" id="arCOG01883">
    <property type="taxonomic scope" value="Archaea"/>
</dbReference>
<dbReference type="OrthoDB" id="18918at2157"/>
<dbReference type="UniPathway" id="UPA00575"/>
<dbReference type="Proteomes" id="UP000000752">
    <property type="component" value="Chromosome"/>
</dbReference>
<dbReference type="GO" id="GO:0050660">
    <property type="term" value="F:flavin adenine dinucleotide binding"/>
    <property type="evidence" value="ECO:0007669"/>
    <property type="project" value="InterPro"/>
</dbReference>
<dbReference type="GO" id="GO:0070402">
    <property type="term" value="F:NADPH binding"/>
    <property type="evidence" value="ECO:0007669"/>
    <property type="project" value="TreeGrafter"/>
</dbReference>
<dbReference type="GO" id="GO:0050797">
    <property type="term" value="F:thymidylate synthase (FAD) activity"/>
    <property type="evidence" value="ECO:0007669"/>
    <property type="project" value="UniProtKB-UniRule"/>
</dbReference>
<dbReference type="GO" id="GO:0004799">
    <property type="term" value="F:thymidylate synthase activity"/>
    <property type="evidence" value="ECO:0007669"/>
    <property type="project" value="TreeGrafter"/>
</dbReference>
<dbReference type="GO" id="GO:0006231">
    <property type="term" value="P:dTMP biosynthetic process"/>
    <property type="evidence" value="ECO:0007669"/>
    <property type="project" value="UniProtKB-UniRule"/>
</dbReference>
<dbReference type="GO" id="GO:0006235">
    <property type="term" value="P:dTTP biosynthetic process"/>
    <property type="evidence" value="ECO:0007669"/>
    <property type="project" value="UniProtKB-UniRule"/>
</dbReference>
<dbReference type="GO" id="GO:0032259">
    <property type="term" value="P:methylation"/>
    <property type="evidence" value="ECO:0007669"/>
    <property type="project" value="UniProtKB-KW"/>
</dbReference>
<dbReference type="CDD" id="cd20175">
    <property type="entry name" value="ThyX"/>
    <property type="match status" value="1"/>
</dbReference>
<dbReference type="FunFam" id="3.30.1360.170:FF:000004">
    <property type="entry name" value="Flavin-dependent thymidylate synthase"/>
    <property type="match status" value="1"/>
</dbReference>
<dbReference type="Gene3D" id="3.30.1360.170">
    <property type="match status" value="1"/>
</dbReference>
<dbReference type="HAMAP" id="MF_01408">
    <property type="entry name" value="ThyX"/>
    <property type="match status" value="1"/>
</dbReference>
<dbReference type="InterPro" id="IPR003669">
    <property type="entry name" value="Thymidylate_synthase_ThyX"/>
</dbReference>
<dbReference type="InterPro" id="IPR036098">
    <property type="entry name" value="Thymidylate_synthase_ThyX_sf"/>
</dbReference>
<dbReference type="NCBIfam" id="TIGR02170">
    <property type="entry name" value="thyX"/>
    <property type="match status" value="1"/>
</dbReference>
<dbReference type="PANTHER" id="PTHR34934">
    <property type="entry name" value="FLAVIN-DEPENDENT THYMIDYLATE SYNTHASE"/>
    <property type="match status" value="1"/>
</dbReference>
<dbReference type="PANTHER" id="PTHR34934:SF1">
    <property type="entry name" value="FLAVIN-DEPENDENT THYMIDYLATE SYNTHASE"/>
    <property type="match status" value="1"/>
</dbReference>
<dbReference type="Pfam" id="PF02511">
    <property type="entry name" value="Thy1"/>
    <property type="match status" value="1"/>
</dbReference>
<dbReference type="SUPFAM" id="SSF69796">
    <property type="entry name" value="Thymidylate synthase-complementing protein Thy1"/>
    <property type="match status" value="1"/>
</dbReference>
<dbReference type="PROSITE" id="PS51331">
    <property type="entry name" value="THYX"/>
    <property type="match status" value="1"/>
</dbReference>
<reference key="1">
    <citation type="journal article" date="1998" name="DNA Res.">
        <title>Complete sequence and gene organization of the genome of a hyper-thermophilic archaebacterium, Pyrococcus horikoshii OT3.</title>
        <authorList>
            <person name="Kawarabayasi Y."/>
            <person name="Sawada M."/>
            <person name="Horikawa H."/>
            <person name="Haikawa Y."/>
            <person name="Hino Y."/>
            <person name="Yamamoto S."/>
            <person name="Sekine M."/>
            <person name="Baba S."/>
            <person name="Kosugi H."/>
            <person name="Hosoyama A."/>
            <person name="Nagai Y."/>
            <person name="Sakai M."/>
            <person name="Ogura K."/>
            <person name="Otsuka R."/>
            <person name="Nakazawa H."/>
            <person name="Takamiya M."/>
            <person name="Ohfuku Y."/>
            <person name="Funahashi T."/>
            <person name="Tanaka T."/>
            <person name="Kudoh Y."/>
            <person name="Yamazaki J."/>
            <person name="Kushida N."/>
            <person name="Oguchi A."/>
            <person name="Aoki K."/>
            <person name="Yoshizawa T."/>
            <person name="Nakamura Y."/>
            <person name="Robb F.T."/>
            <person name="Horikoshi K."/>
            <person name="Masuchi Y."/>
            <person name="Shizuya H."/>
            <person name="Kikuchi H."/>
        </authorList>
    </citation>
    <scope>NUCLEOTIDE SEQUENCE [LARGE SCALE GENOMIC DNA]</scope>
    <source>
        <strain>ATCC 700860 / DSM 12428 / JCM 9974 / NBRC 100139 / OT-3</strain>
    </source>
</reference>
<evidence type="ECO:0000255" key="1">
    <source>
        <dbReference type="HAMAP-Rule" id="MF_01408"/>
    </source>
</evidence>
<evidence type="ECO:0000255" key="2">
    <source>
        <dbReference type="PROSITE-ProRule" id="PRU00661"/>
    </source>
</evidence>
<sequence>MVKVKLINYTPKPLETVTWAALISYWDGWSTEAFEKISPNDVEIHLPRILSYGHESILEHATFTFSIEGCSRVCTHQLVRHRIASYTQQSQRYIKINPEDVEETFVIPESIKKDSELLKEWKELLKRSLELYEKSIERGIHQEDARFILPQSVKTKIVVTMNLRELKHFFGLRLCERAQWEIREVAWKMLEEIAKRKELKPIIEWAKLGPRCIQLGYCPERELMPPGCLKRTRERWKNLLEKY</sequence>
<name>THYX_PYRHO</name>
<gene>
    <name evidence="1" type="primary">thyX</name>
    <name type="ordered locus">PH0762</name>
</gene>
<accession>O58498</accession>